<sequence>MRFVIVTGLSGAGKTQAIRSLEDLGFFCVDNLPPTLIPKFAEACYQTEGKIKKIALVIDIRGGKFFDDLFESLKYLKEEGYKYEILFLDASDEVLIKRFKESRRKHPLSPDGRILNGISMERNRLREVKDRADNIINTSELATRELREAINEIYGEHDQIENQLIITVLSFGFKHGIPLDSDLVFDVRFLPNPYYIKELKQYSGKDKKVSDYVMSFDVTNKFVNRLENMLDFLIPNYFKEGKRQLIISIGCTGGRHRSVAIANAIYEGLKSKGHKVNIDHRDINEDIHKGGKKL</sequence>
<gene>
    <name type="ordered locus">CBO3377</name>
    <name type="ordered locus">CLC_3320</name>
</gene>
<name>Y3377_CLOBH</name>
<comment type="function">
    <text evidence="1">Displays ATPase and GTPase activities.</text>
</comment>
<comment type="similarity">
    <text evidence="1">Belongs to the RapZ-like family.</text>
</comment>
<organism>
    <name type="scientific">Clostridium botulinum (strain Hall / ATCC 3502 / NCTC 13319 / Type A)</name>
    <dbReference type="NCBI Taxonomy" id="441771"/>
    <lineage>
        <taxon>Bacteria</taxon>
        <taxon>Bacillati</taxon>
        <taxon>Bacillota</taxon>
        <taxon>Clostridia</taxon>
        <taxon>Eubacteriales</taxon>
        <taxon>Clostridiaceae</taxon>
        <taxon>Clostridium</taxon>
    </lineage>
</organism>
<proteinExistence type="inferred from homology"/>
<keyword id="KW-0067">ATP-binding</keyword>
<keyword id="KW-0342">GTP-binding</keyword>
<keyword id="KW-0547">Nucleotide-binding</keyword>
<keyword id="KW-1185">Reference proteome</keyword>
<protein>
    <recommendedName>
        <fullName evidence="1">Nucleotide-binding protein CBO3377/CLC_3320</fullName>
    </recommendedName>
</protein>
<dbReference type="EMBL" id="CP000727">
    <property type="protein sequence ID" value="ABS36562.1"/>
    <property type="molecule type" value="Genomic_DNA"/>
</dbReference>
<dbReference type="EMBL" id="AM412317">
    <property type="protein sequence ID" value="CAL84936.1"/>
    <property type="molecule type" value="Genomic_DNA"/>
</dbReference>
<dbReference type="RefSeq" id="YP_001255859.1">
    <property type="nucleotide sequence ID" value="NC_009495.1"/>
</dbReference>
<dbReference type="RefSeq" id="YP_001389100.1">
    <property type="nucleotide sequence ID" value="NC_009698.1"/>
</dbReference>
<dbReference type="SMR" id="A5I7A2"/>
<dbReference type="GeneID" id="5187631"/>
<dbReference type="KEGG" id="cbh:CLC_3320"/>
<dbReference type="KEGG" id="cbo:CBO3377"/>
<dbReference type="PATRIC" id="fig|413999.7.peg.3351"/>
<dbReference type="HOGENOM" id="CLU_059558_0_0_9"/>
<dbReference type="PRO" id="PR:A5I7A2"/>
<dbReference type="Proteomes" id="UP000001986">
    <property type="component" value="Chromosome"/>
</dbReference>
<dbReference type="GO" id="GO:0005524">
    <property type="term" value="F:ATP binding"/>
    <property type="evidence" value="ECO:0007669"/>
    <property type="project" value="UniProtKB-UniRule"/>
</dbReference>
<dbReference type="GO" id="GO:0005525">
    <property type="term" value="F:GTP binding"/>
    <property type="evidence" value="ECO:0007669"/>
    <property type="project" value="UniProtKB-UniRule"/>
</dbReference>
<dbReference type="Gene3D" id="3.40.50.300">
    <property type="entry name" value="P-loop containing nucleotide triphosphate hydrolases"/>
    <property type="match status" value="1"/>
</dbReference>
<dbReference type="HAMAP" id="MF_00636">
    <property type="entry name" value="RapZ_like"/>
    <property type="match status" value="1"/>
</dbReference>
<dbReference type="InterPro" id="IPR027417">
    <property type="entry name" value="P-loop_NTPase"/>
</dbReference>
<dbReference type="InterPro" id="IPR005337">
    <property type="entry name" value="RapZ-like"/>
</dbReference>
<dbReference type="InterPro" id="IPR053930">
    <property type="entry name" value="RapZ-like_N"/>
</dbReference>
<dbReference type="InterPro" id="IPR053931">
    <property type="entry name" value="RapZ_C"/>
</dbReference>
<dbReference type="NCBIfam" id="NF003828">
    <property type="entry name" value="PRK05416.1"/>
    <property type="match status" value="1"/>
</dbReference>
<dbReference type="PANTHER" id="PTHR30448">
    <property type="entry name" value="RNASE ADAPTER PROTEIN RAPZ"/>
    <property type="match status" value="1"/>
</dbReference>
<dbReference type="PANTHER" id="PTHR30448:SF0">
    <property type="entry name" value="RNASE ADAPTER PROTEIN RAPZ"/>
    <property type="match status" value="1"/>
</dbReference>
<dbReference type="Pfam" id="PF22740">
    <property type="entry name" value="PapZ_C"/>
    <property type="match status" value="1"/>
</dbReference>
<dbReference type="Pfam" id="PF03668">
    <property type="entry name" value="RapZ-like_N"/>
    <property type="match status" value="1"/>
</dbReference>
<dbReference type="PIRSF" id="PIRSF005052">
    <property type="entry name" value="P-loopkin"/>
    <property type="match status" value="1"/>
</dbReference>
<dbReference type="SUPFAM" id="SSF52540">
    <property type="entry name" value="P-loop containing nucleoside triphosphate hydrolases"/>
    <property type="match status" value="1"/>
</dbReference>
<evidence type="ECO:0000255" key="1">
    <source>
        <dbReference type="HAMAP-Rule" id="MF_00636"/>
    </source>
</evidence>
<feature type="chain" id="PRO_1000056816" description="Nucleotide-binding protein CBO3377/CLC_3320">
    <location>
        <begin position="1"/>
        <end position="294"/>
    </location>
</feature>
<feature type="binding site" evidence="1">
    <location>
        <begin position="8"/>
        <end position="15"/>
    </location>
    <ligand>
        <name>ATP</name>
        <dbReference type="ChEBI" id="CHEBI:30616"/>
    </ligand>
</feature>
<feature type="binding site" evidence="1">
    <location>
        <begin position="59"/>
        <end position="62"/>
    </location>
    <ligand>
        <name>GTP</name>
        <dbReference type="ChEBI" id="CHEBI:37565"/>
    </ligand>
</feature>
<reference key="1">
    <citation type="journal article" date="2007" name="Genome Res.">
        <title>Genome sequence of a proteolytic (Group I) Clostridium botulinum strain Hall A and comparative analysis of the clostridial genomes.</title>
        <authorList>
            <person name="Sebaihia M."/>
            <person name="Peck M.W."/>
            <person name="Minton N.P."/>
            <person name="Thomson N.R."/>
            <person name="Holden M.T.G."/>
            <person name="Mitchell W.J."/>
            <person name="Carter A.T."/>
            <person name="Bentley S.D."/>
            <person name="Mason D.R."/>
            <person name="Crossman L."/>
            <person name="Paul C.J."/>
            <person name="Ivens A."/>
            <person name="Wells-Bennik M.H.J."/>
            <person name="Davis I.J."/>
            <person name="Cerdeno-Tarraga A.M."/>
            <person name="Churcher C."/>
            <person name="Quail M.A."/>
            <person name="Chillingworth T."/>
            <person name="Feltwell T."/>
            <person name="Fraser A."/>
            <person name="Goodhead I."/>
            <person name="Hance Z."/>
            <person name="Jagels K."/>
            <person name="Larke N."/>
            <person name="Maddison M."/>
            <person name="Moule S."/>
            <person name="Mungall K."/>
            <person name="Norbertczak H."/>
            <person name="Rabbinowitsch E."/>
            <person name="Sanders M."/>
            <person name="Simmonds M."/>
            <person name="White B."/>
            <person name="Whithead S."/>
            <person name="Parkhill J."/>
        </authorList>
    </citation>
    <scope>NUCLEOTIDE SEQUENCE [LARGE SCALE GENOMIC DNA]</scope>
    <source>
        <strain>Hall / ATCC 3502 / NCTC 13319 / Type A</strain>
    </source>
</reference>
<reference key="2">
    <citation type="journal article" date="2007" name="PLoS ONE">
        <title>Analysis of the neurotoxin complex genes in Clostridium botulinum A1-A4 and B1 strains: BoNT/A3, /Ba4 and /B1 clusters are located within plasmids.</title>
        <authorList>
            <person name="Smith T.J."/>
            <person name="Hill K.K."/>
            <person name="Foley B.T."/>
            <person name="Detter J.C."/>
            <person name="Munk A.C."/>
            <person name="Bruce D.C."/>
            <person name="Doggett N.A."/>
            <person name="Smith L.A."/>
            <person name="Marks J.D."/>
            <person name="Xie G."/>
            <person name="Brettin T.S."/>
        </authorList>
    </citation>
    <scope>NUCLEOTIDE SEQUENCE [LARGE SCALE GENOMIC DNA]</scope>
    <source>
        <strain>Hall / ATCC 3502 / NCTC 13319 / Type A</strain>
    </source>
</reference>
<accession>A5I7A2</accession>
<accession>A7G8I5</accession>